<proteinExistence type="inferred from homology"/>
<comment type="function">
    <text evidence="1">This protein is one of the two subunits of integration host factor, a specific DNA-binding protein that functions in genetic recombination as well as in transcriptional and translational control.</text>
</comment>
<comment type="subunit">
    <text evidence="1">Heterodimer of an alpha and a beta chain.</text>
</comment>
<comment type="similarity">
    <text evidence="1">Belongs to the bacterial histone-like protein family.</text>
</comment>
<protein>
    <recommendedName>
        <fullName evidence="1">Integration host factor subunit beta</fullName>
        <shortName evidence="1">IHF-beta</shortName>
    </recommendedName>
</protein>
<sequence>MTKSELVEKLAARFPQLLLRDADISVKTILDAMSDALADGHRIEIRGFGSFGLNRRPPRVGRNPKSGERVLVPEKRVPHFKAGKELRERVDRNLTPSSGGSGNGHLTGTPSGKGPQGAAPGSPAVLHEGGGLNLARS</sequence>
<accession>Q46Y54</accession>
<reference key="1">
    <citation type="journal article" date="2010" name="PLoS ONE">
        <title>The complete multipartite genome sequence of Cupriavidus necator JMP134, a versatile pollutant degrader.</title>
        <authorList>
            <person name="Lykidis A."/>
            <person name="Perez-Pantoja D."/>
            <person name="Ledger T."/>
            <person name="Mavromatis K."/>
            <person name="Anderson I.J."/>
            <person name="Ivanova N.N."/>
            <person name="Hooper S.D."/>
            <person name="Lapidus A."/>
            <person name="Lucas S."/>
            <person name="Gonzalez B."/>
            <person name="Kyrpides N.C."/>
        </authorList>
    </citation>
    <scope>NUCLEOTIDE SEQUENCE [LARGE SCALE GENOMIC DNA]</scope>
    <source>
        <strain>JMP134 / LMG 1197</strain>
    </source>
</reference>
<name>IHFB_CUPPJ</name>
<dbReference type="EMBL" id="CP000090">
    <property type="protein sequence ID" value="AAZ61929.1"/>
    <property type="molecule type" value="Genomic_DNA"/>
</dbReference>
<dbReference type="SMR" id="Q46Y54"/>
<dbReference type="STRING" id="264198.Reut_A2568"/>
<dbReference type="KEGG" id="reu:Reut_A2568"/>
<dbReference type="eggNOG" id="COG0776">
    <property type="taxonomic scope" value="Bacteria"/>
</dbReference>
<dbReference type="HOGENOM" id="CLU_105066_2_0_4"/>
<dbReference type="OrthoDB" id="9804203at2"/>
<dbReference type="GO" id="GO:0005694">
    <property type="term" value="C:chromosome"/>
    <property type="evidence" value="ECO:0007669"/>
    <property type="project" value="InterPro"/>
</dbReference>
<dbReference type="GO" id="GO:0005829">
    <property type="term" value="C:cytosol"/>
    <property type="evidence" value="ECO:0007669"/>
    <property type="project" value="TreeGrafter"/>
</dbReference>
<dbReference type="GO" id="GO:0003677">
    <property type="term" value="F:DNA binding"/>
    <property type="evidence" value="ECO:0007669"/>
    <property type="project" value="UniProtKB-UniRule"/>
</dbReference>
<dbReference type="GO" id="GO:0030527">
    <property type="term" value="F:structural constituent of chromatin"/>
    <property type="evidence" value="ECO:0007669"/>
    <property type="project" value="InterPro"/>
</dbReference>
<dbReference type="GO" id="GO:0006310">
    <property type="term" value="P:DNA recombination"/>
    <property type="evidence" value="ECO:0007669"/>
    <property type="project" value="UniProtKB-UniRule"/>
</dbReference>
<dbReference type="GO" id="GO:0006355">
    <property type="term" value="P:regulation of DNA-templated transcription"/>
    <property type="evidence" value="ECO:0007669"/>
    <property type="project" value="UniProtKB-UniRule"/>
</dbReference>
<dbReference type="GO" id="GO:0006417">
    <property type="term" value="P:regulation of translation"/>
    <property type="evidence" value="ECO:0007669"/>
    <property type="project" value="UniProtKB-UniRule"/>
</dbReference>
<dbReference type="CDD" id="cd13836">
    <property type="entry name" value="IHF_B"/>
    <property type="match status" value="1"/>
</dbReference>
<dbReference type="Gene3D" id="4.10.520.10">
    <property type="entry name" value="IHF-like DNA-binding proteins"/>
    <property type="match status" value="1"/>
</dbReference>
<dbReference type="HAMAP" id="MF_00381">
    <property type="entry name" value="IHF_beta"/>
    <property type="match status" value="1"/>
</dbReference>
<dbReference type="InterPro" id="IPR000119">
    <property type="entry name" value="Hist_DNA-bd"/>
</dbReference>
<dbReference type="InterPro" id="IPR010992">
    <property type="entry name" value="IHF-like_DNA-bd_dom_sf"/>
</dbReference>
<dbReference type="InterPro" id="IPR005685">
    <property type="entry name" value="IHF_beta"/>
</dbReference>
<dbReference type="NCBIfam" id="TIGR00988">
    <property type="entry name" value="hip"/>
    <property type="match status" value="1"/>
</dbReference>
<dbReference type="NCBIfam" id="NF001222">
    <property type="entry name" value="PRK00199.1"/>
    <property type="match status" value="1"/>
</dbReference>
<dbReference type="PANTHER" id="PTHR33175">
    <property type="entry name" value="DNA-BINDING PROTEIN HU"/>
    <property type="match status" value="1"/>
</dbReference>
<dbReference type="PANTHER" id="PTHR33175:SF5">
    <property type="entry name" value="INTEGRATION HOST FACTOR SUBUNIT BETA"/>
    <property type="match status" value="1"/>
</dbReference>
<dbReference type="Pfam" id="PF00216">
    <property type="entry name" value="Bac_DNA_binding"/>
    <property type="match status" value="1"/>
</dbReference>
<dbReference type="PRINTS" id="PR01727">
    <property type="entry name" value="DNABINDINGHU"/>
</dbReference>
<dbReference type="SMART" id="SM00411">
    <property type="entry name" value="BHL"/>
    <property type="match status" value="1"/>
</dbReference>
<dbReference type="SUPFAM" id="SSF47729">
    <property type="entry name" value="IHF-like DNA-binding proteins"/>
    <property type="match status" value="1"/>
</dbReference>
<keyword id="KW-0233">DNA recombination</keyword>
<keyword id="KW-0238">DNA-binding</keyword>
<keyword id="KW-0804">Transcription</keyword>
<keyword id="KW-0805">Transcription regulation</keyword>
<keyword id="KW-0810">Translation regulation</keyword>
<gene>
    <name evidence="1" type="primary">ihfB</name>
    <name evidence="1" type="synonym">himD</name>
    <name type="ordered locus">Reut_A2568</name>
</gene>
<feature type="chain" id="PRO_1000122228" description="Integration host factor subunit beta">
    <location>
        <begin position="1"/>
        <end position="137"/>
    </location>
</feature>
<feature type="region of interest" description="Disordered" evidence="2">
    <location>
        <begin position="75"/>
        <end position="137"/>
    </location>
</feature>
<feature type="compositionally biased region" description="Basic and acidic residues" evidence="2">
    <location>
        <begin position="75"/>
        <end position="92"/>
    </location>
</feature>
<feature type="compositionally biased region" description="Gly residues" evidence="2">
    <location>
        <begin position="128"/>
        <end position="137"/>
    </location>
</feature>
<organism>
    <name type="scientific">Cupriavidus pinatubonensis (strain JMP 134 / LMG 1197)</name>
    <name type="common">Cupriavidus necator (strain JMP 134)</name>
    <dbReference type="NCBI Taxonomy" id="264198"/>
    <lineage>
        <taxon>Bacteria</taxon>
        <taxon>Pseudomonadati</taxon>
        <taxon>Pseudomonadota</taxon>
        <taxon>Betaproteobacteria</taxon>
        <taxon>Burkholderiales</taxon>
        <taxon>Burkholderiaceae</taxon>
        <taxon>Cupriavidus</taxon>
    </lineage>
</organism>
<evidence type="ECO:0000255" key="1">
    <source>
        <dbReference type="HAMAP-Rule" id="MF_00381"/>
    </source>
</evidence>
<evidence type="ECO:0000256" key="2">
    <source>
        <dbReference type="SAM" id="MobiDB-lite"/>
    </source>
</evidence>